<comment type="catalytic activity">
    <reaction evidence="1">
        <text>tRNA(Cys) + L-cysteine + ATP = L-cysteinyl-tRNA(Cys) + AMP + diphosphate</text>
        <dbReference type="Rhea" id="RHEA:17773"/>
        <dbReference type="Rhea" id="RHEA-COMP:9661"/>
        <dbReference type="Rhea" id="RHEA-COMP:9679"/>
        <dbReference type="ChEBI" id="CHEBI:30616"/>
        <dbReference type="ChEBI" id="CHEBI:33019"/>
        <dbReference type="ChEBI" id="CHEBI:35235"/>
        <dbReference type="ChEBI" id="CHEBI:78442"/>
        <dbReference type="ChEBI" id="CHEBI:78517"/>
        <dbReference type="ChEBI" id="CHEBI:456215"/>
        <dbReference type="EC" id="6.1.1.16"/>
    </reaction>
</comment>
<comment type="cofactor">
    <cofactor evidence="1">
        <name>Zn(2+)</name>
        <dbReference type="ChEBI" id="CHEBI:29105"/>
    </cofactor>
    <text evidence="1">Binds 1 zinc ion per subunit.</text>
</comment>
<comment type="subunit">
    <text evidence="1">Monomer.</text>
</comment>
<comment type="subcellular location">
    <subcellularLocation>
        <location evidence="1">Cytoplasm</location>
    </subcellularLocation>
</comment>
<comment type="similarity">
    <text evidence="1">Belongs to the class-I aminoacyl-tRNA synthetase family.</text>
</comment>
<comment type="sequence caution" evidence="3">
    <conflict type="erroneous initiation">
        <sequence resource="EMBL-CDS" id="CAL99791"/>
    </conflict>
</comment>
<evidence type="ECO:0000255" key="1">
    <source>
        <dbReference type="HAMAP-Rule" id="MF_00041"/>
    </source>
</evidence>
<evidence type="ECO:0000256" key="2">
    <source>
        <dbReference type="SAM" id="MobiDB-lite"/>
    </source>
</evidence>
<evidence type="ECO:0000305" key="3"/>
<sequence length="464" mass="51033">MSLHLHDTATRTMREFHPRLAGVASIYVCGATVQGVPHIGHVRGGLNYDVLRRWLVHNGYDVRLVRNVTDIDDKILTKAADAGRPWWEWATAHERAFESAFDRLGCLPPSALPRATGHITQMIELMQRLIDKGHAYAAGGDVYFSVASYAEHYGRLSGQRLDEVQQGESTASGKRDPRDFTLWKAAKPGEPSWPTPWGDGRPGWHLECSAMSTYYLGSEFDIHGGGLDLVFPHHENELAQSTAAGDGFARYWMHNAWVTMSGEKMSKSLGNTVAIPAILQRAAAPEIRYYLVAPHYRSTIEYSEPALAEAISAYRRIDSFVNRVRQRTGEVGHGTVPAEFAAAMDDDLSTPQAIAVVHNAIRESNAALDRGDDRAANEAAASVRTMTDILGLDPLSEQWADTRGADDAAHHALSELVGSMLQQRQQARAERDFATADAVRDRLQACGIAVEDTPDGPLWTLKDG</sequence>
<reference key="1">
    <citation type="journal article" date="2007" name="Nat. Biotechnol.">
        <title>Complete genome sequence of the erythromycin-producing bacterium Saccharopolyspora erythraea NRRL23338.</title>
        <authorList>
            <person name="Oliynyk M."/>
            <person name="Samborskyy M."/>
            <person name="Lester J.B."/>
            <person name="Mironenko T."/>
            <person name="Scott N."/>
            <person name="Dickens S."/>
            <person name="Haydock S.F."/>
            <person name="Leadlay P.F."/>
        </authorList>
    </citation>
    <scope>NUCLEOTIDE SEQUENCE [LARGE SCALE GENOMIC DNA]</scope>
    <source>
        <strain>ATCC 11635 / DSM 40517 / JCM 4748 / NBRC 13426 / NCIMB 8594 / NRRL 2338</strain>
    </source>
</reference>
<name>SYC_SACEN</name>
<dbReference type="EC" id="6.1.1.16" evidence="1"/>
<dbReference type="EMBL" id="AM420293">
    <property type="protein sequence ID" value="CAL99791.1"/>
    <property type="status" value="ALT_INIT"/>
    <property type="molecule type" value="Genomic_DNA"/>
</dbReference>
<dbReference type="RefSeq" id="WP_011873058.1">
    <property type="nucleotide sequence ID" value="NC_009142.1"/>
</dbReference>
<dbReference type="SMR" id="A4F6W7"/>
<dbReference type="STRING" id="405948.SACE_0443"/>
<dbReference type="KEGG" id="sen:SACE_0443"/>
<dbReference type="eggNOG" id="COG0215">
    <property type="taxonomic scope" value="Bacteria"/>
</dbReference>
<dbReference type="HOGENOM" id="CLU_013528_0_1_11"/>
<dbReference type="Proteomes" id="UP000006728">
    <property type="component" value="Chromosome"/>
</dbReference>
<dbReference type="GO" id="GO:0005829">
    <property type="term" value="C:cytosol"/>
    <property type="evidence" value="ECO:0007669"/>
    <property type="project" value="TreeGrafter"/>
</dbReference>
<dbReference type="GO" id="GO:0005524">
    <property type="term" value="F:ATP binding"/>
    <property type="evidence" value="ECO:0007669"/>
    <property type="project" value="UniProtKB-UniRule"/>
</dbReference>
<dbReference type="GO" id="GO:0004817">
    <property type="term" value="F:cysteine-tRNA ligase activity"/>
    <property type="evidence" value="ECO:0007669"/>
    <property type="project" value="UniProtKB-UniRule"/>
</dbReference>
<dbReference type="GO" id="GO:0008270">
    <property type="term" value="F:zinc ion binding"/>
    <property type="evidence" value="ECO:0007669"/>
    <property type="project" value="UniProtKB-UniRule"/>
</dbReference>
<dbReference type="GO" id="GO:0006423">
    <property type="term" value="P:cysteinyl-tRNA aminoacylation"/>
    <property type="evidence" value="ECO:0007669"/>
    <property type="project" value="UniProtKB-UniRule"/>
</dbReference>
<dbReference type="CDD" id="cd00672">
    <property type="entry name" value="CysRS_core"/>
    <property type="match status" value="1"/>
</dbReference>
<dbReference type="FunFam" id="3.40.50.620:FF:000068">
    <property type="entry name" value="Cysteine--tRNA ligase"/>
    <property type="match status" value="1"/>
</dbReference>
<dbReference type="Gene3D" id="1.20.120.1910">
    <property type="entry name" value="Cysteine-tRNA ligase, C-terminal anti-codon recognition domain"/>
    <property type="match status" value="1"/>
</dbReference>
<dbReference type="Gene3D" id="3.40.50.620">
    <property type="entry name" value="HUPs"/>
    <property type="match status" value="1"/>
</dbReference>
<dbReference type="HAMAP" id="MF_00041">
    <property type="entry name" value="Cys_tRNA_synth"/>
    <property type="match status" value="1"/>
</dbReference>
<dbReference type="InterPro" id="IPR015803">
    <property type="entry name" value="Cys-tRNA-ligase"/>
</dbReference>
<dbReference type="InterPro" id="IPR015273">
    <property type="entry name" value="Cys-tRNA-synt_Ia_DALR"/>
</dbReference>
<dbReference type="InterPro" id="IPR024909">
    <property type="entry name" value="Cys-tRNA/MSH_ligase"/>
</dbReference>
<dbReference type="InterPro" id="IPR056411">
    <property type="entry name" value="CysS_C"/>
</dbReference>
<dbReference type="InterPro" id="IPR014729">
    <property type="entry name" value="Rossmann-like_a/b/a_fold"/>
</dbReference>
<dbReference type="InterPro" id="IPR032678">
    <property type="entry name" value="tRNA-synt_1_cat_dom"/>
</dbReference>
<dbReference type="InterPro" id="IPR009080">
    <property type="entry name" value="tRNAsynth_Ia_anticodon-bd"/>
</dbReference>
<dbReference type="NCBIfam" id="TIGR00435">
    <property type="entry name" value="cysS"/>
    <property type="match status" value="1"/>
</dbReference>
<dbReference type="PANTHER" id="PTHR10890:SF30">
    <property type="entry name" value="CYSTEINE--TRNA LIGASE"/>
    <property type="match status" value="1"/>
</dbReference>
<dbReference type="PANTHER" id="PTHR10890">
    <property type="entry name" value="CYSTEINYL-TRNA SYNTHETASE"/>
    <property type="match status" value="1"/>
</dbReference>
<dbReference type="Pfam" id="PF23493">
    <property type="entry name" value="CysS_C"/>
    <property type="match status" value="1"/>
</dbReference>
<dbReference type="Pfam" id="PF09190">
    <property type="entry name" value="DALR_2"/>
    <property type="match status" value="1"/>
</dbReference>
<dbReference type="Pfam" id="PF01406">
    <property type="entry name" value="tRNA-synt_1e"/>
    <property type="match status" value="1"/>
</dbReference>
<dbReference type="PRINTS" id="PR00983">
    <property type="entry name" value="TRNASYNTHCYS"/>
</dbReference>
<dbReference type="SMART" id="SM00840">
    <property type="entry name" value="DALR_2"/>
    <property type="match status" value="1"/>
</dbReference>
<dbReference type="SUPFAM" id="SSF47323">
    <property type="entry name" value="Anticodon-binding domain of a subclass of class I aminoacyl-tRNA synthetases"/>
    <property type="match status" value="1"/>
</dbReference>
<dbReference type="SUPFAM" id="SSF52374">
    <property type="entry name" value="Nucleotidylyl transferase"/>
    <property type="match status" value="1"/>
</dbReference>
<gene>
    <name evidence="1" type="primary">cysS</name>
    <name type="ordered locus">SACE_0443</name>
</gene>
<feature type="chain" id="PRO_0000332893" description="Cysteine--tRNA ligase">
    <location>
        <begin position="1"/>
        <end position="464"/>
    </location>
</feature>
<feature type="region of interest" description="Disordered" evidence="2">
    <location>
        <begin position="160"/>
        <end position="180"/>
    </location>
</feature>
<feature type="short sequence motif" description="'HIGH' region">
    <location>
        <begin position="31"/>
        <end position="41"/>
    </location>
</feature>
<feature type="short sequence motif" description="'KMSKS' region">
    <location>
        <begin position="264"/>
        <end position="268"/>
    </location>
</feature>
<feature type="binding site" evidence="1">
    <location>
        <position position="29"/>
    </location>
    <ligand>
        <name>Zn(2+)</name>
        <dbReference type="ChEBI" id="CHEBI:29105"/>
    </ligand>
</feature>
<feature type="binding site" evidence="1">
    <location>
        <position position="208"/>
    </location>
    <ligand>
        <name>Zn(2+)</name>
        <dbReference type="ChEBI" id="CHEBI:29105"/>
    </ligand>
</feature>
<feature type="binding site" evidence="1">
    <location>
        <position position="233"/>
    </location>
    <ligand>
        <name>Zn(2+)</name>
        <dbReference type="ChEBI" id="CHEBI:29105"/>
    </ligand>
</feature>
<feature type="binding site" evidence="1">
    <location>
        <position position="237"/>
    </location>
    <ligand>
        <name>Zn(2+)</name>
        <dbReference type="ChEBI" id="CHEBI:29105"/>
    </ligand>
</feature>
<feature type="binding site" evidence="1">
    <location>
        <position position="267"/>
    </location>
    <ligand>
        <name>ATP</name>
        <dbReference type="ChEBI" id="CHEBI:30616"/>
    </ligand>
</feature>
<protein>
    <recommendedName>
        <fullName evidence="1">Cysteine--tRNA ligase</fullName>
        <ecNumber evidence="1">6.1.1.16</ecNumber>
    </recommendedName>
    <alternativeName>
        <fullName evidence="1">Cysteinyl-tRNA synthetase</fullName>
        <shortName evidence="1">CysRS</shortName>
    </alternativeName>
</protein>
<keyword id="KW-0030">Aminoacyl-tRNA synthetase</keyword>
<keyword id="KW-0067">ATP-binding</keyword>
<keyword id="KW-0963">Cytoplasm</keyword>
<keyword id="KW-0436">Ligase</keyword>
<keyword id="KW-0479">Metal-binding</keyword>
<keyword id="KW-0547">Nucleotide-binding</keyword>
<keyword id="KW-0648">Protein biosynthesis</keyword>
<keyword id="KW-1185">Reference proteome</keyword>
<keyword id="KW-0862">Zinc</keyword>
<proteinExistence type="inferred from homology"/>
<organism>
    <name type="scientific">Saccharopolyspora erythraea (strain ATCC 11635 / DSM 40517 / JCM 4748 / NBRC 13426 / NCIMB 8594 / NRRL 2338)</name>
    <dbReference type="NCBI Taxonomy" id="405948"/>
    <lineage>
        <taxon>Bacteria</taxon>
        <taxon>Bacillati</taxon>
        <taxon>Actinomycetota</taxon>
        <taxon>Actinomycetes</taxon>
        <taxon>Pseudonocardiales</taxon>
        <taxon>Pseudonocardiaceae</taxon>
        <taxon>Saccharopolyspora</taxon>
    </lineage>
</organism>
<accession>A4F6W7</accession>